<protein>
    <recommendedName>
        <fullName evidence="1">Divalent metal cation transporter MntH</fullName>
    </recommendedName>
</protein>
<feature type="chain" id="PRO_1000024117" description="Divalent metal cation transporter MntH">
    <location>
        <begin position="1"/>
        <end position="409"/>
    </location>
</feature>
<feature type="transmembrane region" description="Helical" evidence="1">
    <location>
        <begin position="19"/>
        <end position="39"/>
    </location>
</feature>
<feature type="transmembrane region" description="Helical" evidence="1">
    <location>
        <begin position="46"/>
        <end position="66"/>
    </location>
</feature>
<feature type="transmembrane region" description="Helical" evidence="1">
    <location>
        <begin position="98"/>
        <end position="118"/>
    </location>
</feature>
<feature type="transmembrane region" description="Helical" evidence="1">
    <location>
        <begin position="122"/>
        <end position="142"/>
    </location>
</feature>
<feature type="transmembrane region" description="Helical" evidence="1">
    <location>
        <begin position="155"/>
        <end position="175"/>
    </location>
</feature>
<feature type="transmembrane region" description="Helical" evidence="1">
    <location>
        <begin position="196"/>
        <end position="216"/>
    </location>
</feature>
<feature type="transmembrane region" description="Helical" evidence="1">
    <location>
        <begin position="241"/>
        <end position="261"/>
    </location>
</feature>
<feature type="transmembrane region" description="Helical" evidence="1">
    <location>
        <begin position="290"/>
        <end position="310"/>
    </location>
</feature>
<feature type="transmembrane region" description="Helical" evidence="1">
    <location>
        <begin position="320"/>
        <end position="340"/>
    </location>
</feature>
<feature type="transmembrane region" description="Helical" evidence="1">
    <location>
        <begin position="348"/>
        <end position="368"/>
    </location>
</feature>
<feature type="transmembrane region" description="Helical" evidence="1">
    <location>
        <begin position="388"/>
        <end position="408"/>
    </location>
</feature>
<evidence type="ECO:0000255" key="1">
    <source>
        <dbReference type="HAMAP-Rule" id="MF_00221"/>
    </source>
</evidence>
<organism>
    <name type="scientific">Yersinia pestis bv. Antiqua (strain Antiqua)</name>
    <dbReference type="NCBI Taxonomy" id="360102"/>
    <lineage>
        <taxon>Bacteria</taxon>
        <taxon>Pseudomonadati</taxon>
        <taxon>Pseudomonadota</taxon>
        <taxon>Gammaproteobacteria</taxon>
        <taxon>Enterobacterales</taxon>
        <taxon>Yersiniaceae</taxon>
        <taxon>Yersinia</taxon>
    </lineage>
</organism>
<name>MNTH_YERPA</name>
<comment type="function">
    <text evidence="1">H(+)-stimulated, divalent metal cation uptake system.</text>
</comment>
<comment type="subcellular location">
    <subcellularLocation>
        <location evidence="1">Cell inner membrane</location>
        <topology evidence="1">Multi-pass membrane protein</topology>
    </subcellularLocation>
</comment>
<comment type="similarity">
    <text evidence="1">Belongs to the NRAMP family.</text>
</comment>
<proteinExistence type="inferred from homology"/>
<accession>Q1C5Y6</accession>
<dbReference type="EMBL" id="CP000308">
    <property type="protein sequence ID" value="ABG14136.1"/>
    <property type="molecule type" value="Genomic_DNA"/>
</dbReference>
<dbReference type="RefSeq" id="WP_002211621.1">
    <property type="nucleotide sequence ID" value="NZ_CP009906.1"/>
</dbReference>
<dbReference type="SMR" id="Q1C5Y6"/>
<dbReference type="KEGG" id="ypa:YPA_2171"/>
<dbReference type="Proteomes" id="UP000001971">
    <property type="component" value="Chromosome"/>
</dbReference>
<dbReference type="GO" id="GO:0005886">
    <property type="term" value="C:plasma membrane"/>
    <property type="evidence" value="ECO:0007669"/>
    <property type="project" value="UniProtKB-SubCell"/>
</dbReference>
<dbReference type="GO" id="GO:0015086">
    <property type="term" value="F:cadmium ion transmembrane transporter activity"/>
    <property type="evidence" value="ECO:0007669"/>
    <property type="project" value="TreeGrafter"/>
</dbReference>
<dbReference type="GO" id="GO:0005384">
    <property type="term" value="F:manganese ion transmembrane transporter activity"/>
    <property type="evidence" value="ECO:0007669"/>
    <property type="project" value="TreeGrafter"/>
</dbReference>
<dbReference type="GO" id="GO:0046872">
    <property type="term" value="F:metal ion binding"/>
    <property type="evidence" value="ECO:0007669"/>
    <property type="project" value="UniProtKB-UniRule"/>
</dbReference>
<dbReference type="GO" id="GO:0015293">
    <property type="term" value="F:symporter activity"/>
    <property type="evidence" value="ECO:0007669"/>
    <property type="project" value="UniProtKB-UniRule"/>
</dbReference>
<dbReference type="GO" id="GO:0034755">
    <property type="term" value="P:iron ion transmembrane transport"/>
    <property type="evidence" value="ECO:0007669"/>
    <property type="project" value="TreeGrafter"/>
</dbReference>
<dbReference type="HAMAP" id="MF_00221">
    <property type="entry name" value="NRAMP"/>
    <property type="match status" value="1"/>
</dbReference>
<dbReference type="InterPro" id="IPR001046">
    <property type="entry name" value="NRAMP_fam"/>
</dbReference>
<dbReference type="NCBIfam" id="TIGR01197">
    <property type="entry name" value="nramp"/>
    <property type="match status" value="1"/>
</dbReference>
<dbReference type="NCBIfam" id="NF037982">
    <property type="entry name" value="Nramp_1"/>
    <property type="match status" value="1"/>
</dbReference>
<dbReference type="NCBIfam" id="NF001923">
    <property type="entry name" value="PRK00701.1"/>
    <property type="match status" value="1"/>
</dbReference>
<dbReference type="PANTHER" id="PTHR11706:SF33">
    <property type="entry name" value="NATURAL RESISTANCE-ASSOCIATED MACROPHAGE PROTEIN 2"/>
    <property type="match status" value="1"/>
</dbReference>
<dbReference type="PANTHER" id="PTHR11706">
    <property type="entry name" value="SOLUTE CARRIER PROTEIN FAMILY 11 MEMBER"/>
    <property type="match status" value="1"/>
</dbReference>
<dbReference type="Pfam" id="PF01566">
    <property type="entry name" value="Nramp"/>
    <property type="match status" value="1"/>
</dbReference>
<dbReference type="PRINTS" id="PR00447">
    <property type="entry name" value="NATRESASSCMP"/>
</dbReference>
<sequence>MLNGRAVDTSRRPLRKIKLSLMGPAFIAAIAYIDPGNFATNIQAGATFGYTLLWVVVWANVMAMLVQLLSAKLGIATGKNLAEHIRDRFPRPVVWAYWVQAEIIVMATDLAEFIGAAIGFKLLFGVTLLQGAVLTGIATFLILMLQNRGQKPLELVIGGLLLFVAAAYIVELIFSQPDIAALGRGMLIPNLPDGNAVFLAAGVLGATIMPHVIYLHSALTQTGGEESKTERYASTKFDVAIAMTIAGFVNLAMMATAAAAFHFNGYENIAEIEEAYITLQPLLGNAAATVFGLSLIAAGLSSTVVGTLAGQVVMQGFVRFYIPMWVRRIVTMLPSFIVILAGMDATQILVMSQVLLSFGIALALVPLLVFTGNKELMGELVDTKTTQILGKLVVLIVVGLNAYLLISLL</sequence>
<reference key="1">
    <citation type="journal article" date="2006" name="J. Bacteriol.">
        <title>Complete genome sequence of Yersinia pestis strains Antiqua and Nepal516: evidence of gene reduction in an emerging pathogen.</title>
        <authorList>
            <person name="Chain P.S.G."/>
            <person name="Hu P."/>
            <person name="Malfatti S.A."/>
            <person name="Radnedge L."/>
            <person name="Larimer F."/>
            <person name="Vergez L.M."/>
            <person name="Worsham P."/>
            <person name="Chu M.C."/>
            <person name="Andersen G.L."/>
        </authorList>
    </citation>
    <scope>NUCLEOTIDE SEQUENCE [LARGE SCALE GENOMIC DNA]</scope>
    <source>
        <strain>Antiqua</strain>
    </source>
</reference>
<keyword id="KW-0997">Cell inner membrane</keyword>
<keyword id="KW-1003">Cell membrane</keyword>
<keyword id="KW-0406">Ion transport</keyword>
<keyword id="KW-0472">Membrane</keyword>
<keyword id="KW-0769">Symport</keyword>
<keyword id="KW-0812">Transmembrane</keyword>
<keyword id="KW-1133">Transmembrane helix</keyword>
<keyword id="KW-0813">Transport</keyword>
<gene>
    <name evidence="1" type="primary">mntH</name>
    <name type="ordered locus">YPA_2171</name>
</gene>